<keyword id="KW-0687">Ribonucleoprotein</keyword>
<keyword id="KW-0689">Ribosomal protein</keyword>
<keyword id="KW-0694">RNA-binding</keyword>
<keyword id="KW-0699">rRNA-binding</keyword>
<accession>B2V7K9</accession>
<protein>
    <recommendedName>
        <fullName evidence="1">Small ribosomal subunit protein uS19</fullName>
    </recommendedName>
    <alternativeName>
        <fullName evidence="2">30S ribosomal protein S19</fullName>
    </alternativeName>
</protein>
<proteinExistence type="inferred from homology"/>
<evidence type="ECO:0000255" key="1">
    <source>
        <dbReference type="HAMAP-Rule" id="MF_00531"/>
    </source>
</evidence>
<evidence type="ECO:0000305" key="2"/>
<sequence length="99" mass="11565">MGYKGKWNERNKNPYVNEKILKKIIKMNETGERKIIKVWDRSCTITQEMVGHTIAVYNGQKFIPVYIQPEMVGHKLGEFSLTRTFRGHPDKSAKVVKKK</sequence>
<dbReference type="EMBL" id="CP001080">
    <property type="protein sequence ID" value="ACD65932.1"/>
    <property type="molecule type" value="Genomic_DNA"/>
</dbReference>
<dbReference type="RefSeq" id="WP_012459021.1">
    <property type="nucleotide sequence ID" value="NC_010730.1"/>
</dbReference>
<dbReference type="SMR" id="B2V7K9"/>
<dbReference type="STRING" id="436114.SYO3AOP1_0287"/>
<dbReference type="KEGG" id="sul:SYO3AOP1_0287"/>
<dbReference type="eggNOG" id="COG0185">
    <property type="taxonomic scope" value="Bacteria"/>
</dbReference>
<dbReference type="HOGENOM" id="CLU_144911_0_1_0"/>
<dbReference type="GO" id="GO:0022627">
    <property type="term" value="C:cytosolic small ribosomal subunit"/>
    <property type="evidence" value="ECO:0007669"/>
    <property type="project" value="TreeGrafter"/>
</dbReference>
<dbReference type="GO" id="GO:0019843">
    <property type="term" value="F:rRNA binding"/>
    <property type="evidence" value="ECO:0007669"/>
    <property type="project" value="UniProtKB-UniRule"/>
</dbReference>
<dbReference type="GO" id="GO:0003735">
    <property type="term" value="F:structural constituent of ribosome"/>
    <property type="evidence" value="ECO:0007669"/>
    <property type="project" value="InterPro"/>
</dbReference>
<dbReference type="GO" id="GO:0000028">
    <property type="term" value="P:ribosomal small subunit assembly"/>
    <property type="evidence" value="ECO:0007669"/>
    <property type="project" value="TreeGrafter"/>
</dbReference>
<dbReference type="GO" id="GO:0006412">
    <property type="term" value="P:translation"/>
    <property type="evidence" value="ECO:0007669"/>
    <property type="project" value="UniProtKB-UniRule"/>
</dbReference>
<dbReference type="FunFam" id="3.30.860.10:FF:000001">
    <property type="entry name" value="30S ribosomal protein S19"/>
    <property type="match status" value="1"/>
</dbReference>
<dbReference type="Gene3D" id="3.30.860.10">
    <property type="entry name" value="30s Ribosomal Protein S19, Chain A"/>
    <property type="match status" value="1"/>
</dbReference>
<dbReference type="HAMAP" id="MF_00531">
    <property type="entry name" value="Ribosomal_uS19"/>
    <property type="match status" value="1"/>
</dbReference>
<dbReference type="InterPro" id="IPR002222">
    <property type="entry name" value="Ribosomal_uS19"/>
</dbReference>
<dbReference type="InterPro" id="IPR005732">
    <property type="entry name" value="Ribosomal_uS19_bac-type"/>
</dbReference>
<dbReference type="InterPro" id="IPR020934">
    <property type="entry name" value="Ribosomal_uS19_CS"/>
</dbReference>
<dbReference type="InterPro" id="IPR023575">
    <property type="entry name" value="Ribosomal_uS19_SF"/>
</dbReference>
<dbReference type="NCBIfam" id="TIGR01050">
    <property type="entry name" value="rpsS_bact"/>
    <property type="match status" value="1"/>
</dbReference>
<dbReference type="PANTHER" id="PTHR11880">
    <property type="entry name" value="RIBOSOMAL PROTEIN S19P FAMILY MEMBER"/>
    <property type="match status" value="1"/>
</dbReference>
<dbReference type="PANTHER" id="PTHR11880:SF2">
    <property type="entry name" value="SMALL RIBOSOMAL SUBUNIT PROTEIN US19"/>
    <property type="match status" value="1"/>
</dbReference>
<dbReference type="Pfam" id="PF00203">
    <property type="entry name" value="Ribosomal_S19"/>
    <property type="match status" value="1"/>
</dbReference>
<dbReference type="PIRSF" id="PIRSF002144">
    <property type="entry name" value="Ribosomal_S19"/>
    <property type="match status" value="1"/>
</dbReference>
<dbReference type="PRINTS" id="PR00975">
    <property type="entry name" value="RIBOSOMALS19"/>
</dbReference>
<dbReference type="SUPFAM" id="SSF54570">
    <property type="entry name" value="Ribosomal protein S19"/>
    <property type="match status" value="1"/>
</dbReference>
<dbReference type="PROSITE" id="PS00323">
    <property type="entry name" value="RIBOSOMAL_S19"/>
    <property type="match status" value="1"/>
</dbReference>
<comment type="function">
    <text evidence="1">Protein S19 forms a complex with S13 that binds strongly to the 16S ribosomal RNA.</text>
</comment>
<comment type="similarity">
    <text evidence="1">Belongs to the universal ribosomal protein uS19 family.</text>
</comment>
<organism>
    <name type="scientific">Sulfurihydrogenibium sp. (strain YO3AOP1)</name>
    <dbReference type="NCBI Taxonomy" id="436114"/>
    <lineage>
        <taxon>Bacteria</taxon>
        <taxon>Pseudomonadati</taxon>
        <taxon>Aquificota</taxon>
        <taxon>Aquificia</taxon>
        <taxon>Aquificales</taxon>
        <taxon>Hydrogenothermaceae</taxon>
        <taxon>Sulfurihydrogenibium</taxon>
    </lineage>
</organism>
<feature type="chain" id="PRO_0000354304" description="Small ribosomal subunit protein uS19">
    <location>
        <begin position="1"/>
        <end position="99"/>
    </location>
</feature>
<name>RS19_SULSY</name>
<gene>
    <name evidence="1" type="primary">rpsS</name>
    <name type="ordered locus">SYO3AOP1_0287</name>
</gene>
<reference key="1">
    <citation type="journal article" date="2009" name="J. Bacteriol.">
        <title>Complete and draft genome sequences of six members of the Aquificales.</title>
        <authorList>
            <person name="Reysenbach A.-L."/>
            <person name="Hamamura N."/>
            <person name="Podar M."/>
            <person name="Griffiths E."/>
            <person name="Ferreira S."/>
            <person name="Hochstein R."/>
            <person name="Heidelberg J."/>
            <person name="Johnson J."/>
            <person name="Mead D."/>
            <person name="Pohorille A."/>
            <person name="Sarmiento M."/>
            <person name="Schweighofer K."/>
            <person name="Seshadri R."/>
            <person name="Voytek M.A."/>
        </authorList>
    </citation>
    <scope>NUCLEOTIDE SEQUENCE [LARGE SCALE GENOMIC DNA]</scope>
    <source>
        <strain>YO3AOP1</strain>
    </source>
</reference>